<accession>B0VDJ1</accession>
<name>PUR5_ACIBY</name>
<sequence>MSNSTSTPNTGLSYKDAGVDIEAGDALVDRIKSVAKRTTRPEVMGGLGGFGALCKIPKGYEEPVLVSGTDGVGTKLRLALNLNRHDTIGQDLVAMCVNDLLVCGAEPLFFLDYYATGHLNVDVAANVVTGIGKGCELAGCALVGGETAEMPGMYEGEDYDLAGFAVGVVEQSKIIDGSKVKSGDVLIGVASSGAHSNGYSLLRKILDVKNVDLTQVIDGRPLADVAMEPTRIYVKPVLELCKQVDVHAMAHITGGGLPGNLPRVLPNGAQAVINEASWEWPELFKLLQREGNVERFEMYRTFNCGVGMVIAVDANDAEKAIEVLNAQGEKAWKIGHIQENAESVEGADEKIRVIFE</sequence>
<reference key="1">
    <citation type="journal article" date="2008" name="PLoS ONE">
        <title>Comparative analysis of Acinetobacters: three genomes for three lifestyles.</title>
        <authorList>
            <person name="Vallenet D."/>
            <person name="Nordmann P."/>
            <person name="Barbe V."/>
            <person name="Poirel L."/>
            <person name="Mangenot S."/>
            <person name="Bataille E."/>
            <person name="Dossat C."/>
            <person name="Gas S."/>
            <person name="Kreimeyer A."/>
            <person name="Lenoble P."/>
            <person name="Oztas S."/>
            <person name="Poulain J."/>
            <person name="Segurens B."/>
            <person name="Robert C."/>
            <person name="Abergel C."/>
            <person name="Claverie J.-M."/>
            <person name="Raoult D."/>
            <person name="Medigue C."/>
            <person name="Weissenbach J."/>
            <person name="Cruveiller S."/>
        </authorList>
    </citation>
    <scope>NUCLEOTIDE SEQUENCE [LARGE SCALE GENOMIC DNA]</scope>
    <source>
        <strain>AYE</strain>
    </source>
</reference>
<dbReference type="EC" id="6.3.3.1" evidence="1"/>
<dbReference type="EMBL" id="CU459141">
    <property type="protein sequence ID" value="CAM85837.1"/>
    <property type="molecule type" value="Genomic_DNA"/>
</dbReference>
<dbReference type="RefSeq" id="WP_000071984.1">
    <property type="nucleotide sequence ID" value="NZ_JBDGFB010000021.1"/>
</dbReference>
<dbReference type="SMR" id="B0VDJ1"/>
<dbReference type="EnsemblBacteria" id="CAM85837">
    <property type="protein sequence ID" value="CAM85837"/>
    <property type="gene ID" value="ABAYE0889"/>
</dbReference>
<dbReference type="GeneID" id="92894879"/>
<dbReference type="KEGG" id="aby:ABAYE0889"/>
<dbReference type="HOGENOM" id="CLU_047116_0_0_6"/>
<dbReference type="UniPathway" id="UPA00074">
    <property type="reaction ID" value="UER00129"/>
</dbReference>
<dbReference type="GO" id="GO:0005829">
    <property type="term" value="C:cytosol"/>
    <property type="evidence" value="ECO:0007669"/>
    <property type="project" value="TreeGrafter"/>
</dbReference>
<dbReference type="GO" id="GO:0005524">
    <property type="term" value="F:ATP binding"/>
    <property type="evidence" value="ECO:0007669"/>
    <property type="project" value="UniProtKB-KW"/>
</dbReference>
<dbReference type="GO" id="GO:0004637">
    <property type="term" value="F:phosphoribosylamine-glycine ligase activity"/>
    <property type="evidence" value="ECO:0007669"/>
    <property type="project" value="TreeGrafter"/>
</dbReference>
<dbReference type="GO" id="GO:0004641">
    <property type="term" value="F:phosphoribosylformylglycinamidine cyclo-ligase activity"/>
    <property type="evidence" value="ECO:0007669"/>
    <property type="project" value="UniProtKB-UniRule"/>
</dbReference>
<dbReference type="GO" id="GO:0006189">
    <property type="term" value="P:'de novo' IMP biosynthetic process"/>
    <property type="evidence" value="ECO:0007669"/>
    <property type="project" value="UniProtKB-UniRule"/>
</dbReference>
<dbReference type="GO" id="GO:0046084">
    <property type="term" value="P:adenine biosynthetic process"/>
    <property type="evidence" value="ECO:0007669"/>
    <property type="project" value="TreeGrafter"/>
</dbReference>
<dbReference type="CDD" id="cd02196">
    <property type="entry name" value="PurM"/>
    <property type="match status" value="1"/>
</dbReference>
<dbReference type="FunFam" id="3.30.1330.10:FF:000001">
    <property type="entry name" value="Phosphoribosylformylglycinamidine cyclo-ligase"/>
    <property type="match status" value="1"/>
</dbReference>
<dbReference type="FunFam" id="3.90.650.10:FF:000001">
    <property type="entry name" value="Phosphoribosylformylglycinamidine cyclo-ligase"/>
    <property type="match status" value="1"/>
</dbReference>
<dbReference type="Gene3D" id="3.90.650.10">
    <property type="entry name" value="PurM-like C-terminal domain"/>
    <property type="match status" value="1"/>
</dbReference>
<dbReference type="Gene3D" id="3.30.1330.10">
    <property type="entry name" value="PurM-like, N-terminal domain"/>
    <property type="match status" value="1"/>
</dbReference>
<dbReference type="HAMAP" id="MF_00741">
    <property type="entry name" value="AIRS"/>
    <property type="match status" value="1"/>
</dbReference>
<dbReference type="InterPro" id="IPR010918">
    <property type="entry name" value="PurM-like_C_dom"/>
</dbReference>
<dbReference type="InterPro" id="IPR036676">
    <property type="entry name" value="PurM-like_C_sf"/>
</dbReference>
<dbReference type="InterPro" id="IPR016188">
    <property type="entry name" value="PurM-like_N"/>
</dbReference>
<dbReference type="InterPro" id="IPR036921">
    <property type="entry name" value="PurM-like_N_sf"/>
</dbReference>
<dbReference type="InterPro" id="IPR004733">
    <property type="entry name" value="PurM_cligase"/>
</dbReference>
<dbReference type="NCBIfam" id="TIGR00878">
    <property type="entry name" value="purM"/>
    <property type="match status" value="1"/>
</dbReference>
<dbReference type="PANTHER" id="PTHR10520:SF12">
    <property type="entry name" value="TRIFUNCTIONAL PURINE BIOSYNTHETIC PROTEIN ADENOSINE-3"/>
    <property type="match status" value="1"/>
</dbReference>
<dbReference type="PANTHER" id="PTHR10520">
    <property type="entry name" value="TRIFUNCTIONAL PURINE BIOSYNTHETIC PROTEIN ADENOSINE-3-RELATED"/>
    <property type="match status" value="1"/>
</dbReference>
<dbReference type="Pfam" id="PF00586">
    <property type="entry name" value="AIRS"/>
    <property type="match status" value="1"/>
</dbReference>
<dbReference type="Pfam" id="PF02769">
    <property type="entry name" value="AIRS_C"/>
    <property type="match status" value="1"/>
</dbReference>
<dbReference type="SUPFAM" id="SSF56042">
    <property type="entry name" value="PurM C-terminal domain-like"/>
    <property type="match status" value="1"/>
</dbReference>
<dbReference type="SUPFAM" id="SSF55326">
    <property type="entry name" value="PurM N-terminal domain-like"/>
    <property type="match status" value="1"/>
</dbReference>
<proteinExistence type="inferred from homology"/>
<comment type="catalytic activity">
    <reaction evidence="1">
        <text>2-formamido-N(1)-(5-O-phospho-beta-D-ribosyl)acetamidine + ATP = 5-amino-1-(5-phospho-beta-D-ribosyl)imidazole + ADP + phosphate + H(+)</text>
        <dbReference type="Rhea" id="RHEA:23032"/>
        <dbReference type="ChEBI" id="CHEBI:15378"/>
        <dbReference type="ChEBI" id="CHEBI:30616"/>
        <dbReference type="ChEBI" id="CHEBI:43474"/>
        <dbReference type="ChEBI" id="CHEBI:137981"/>
        <dbReference type="ChEBI" id="CHEBI:147287"/>
        <dbReference type="ChEBI" id="CHEBI:456216"/>
        <dbReference type="EC" id="6.3.3.1"/>
    </reaction>
</comment>
<comment type="pathway">
    <text evidence="1">Purine metabolism; IMP biosynthesis via de novo pathway; 5-amino-1-(5-phospho-D-ribosyl)imidazole from N(2)-formyl-N(1)-(5-phospho-D-ribosyl)glycinamide: step 2/2.</text>
</comment>
<comment type="subcellular location">
    <subcellularLocation>
        <location evidence="1">Cytoplasm</location>
    </subcellularLocation>
</comment>
<comment type="similarity">
    <text evidence="1">Belongs to the AIR synthase family.</text>
</comment>
<feature type="chain" id="PRO_1000192985" description="Phosphoribosylformylglycinamidine cyclo-ligase">
    <location>
        <begin position="1"/>
        <end position="356"/>
    </location>
</feature>
<gene>
    <name evidence="1" type="primary">purM</name>
    <name type="ordered locus">ABAYE0889</name>
</gene>
<keyword id="KW-0067">ATP-binding</keyword>
<keyword id="KW-0963">Cytoplasm</keyword>
<keyword id="KW-0436">Ligase</keyword>
<keyword id="KW-0547">Nucleotide-binding</keyword>
<keyword id="KW-0658">Purine biosynthesis</keyword>
<evidence type="ECO:0000255" key="1">
    <source>
        <dbReference type="HAMAP-Rule" id="MF_00741"/>
    </source>
</evidence>
<organism>
    <name type="scientific">Acinetobacter baumannii (strain AYE)</name>
    <dbReference type="NCBI Taxonomy" id="509173"/>
    <lineage>
        <taxon>Bacteria</taxon>
        <taxon>Pseudomonadati</taxon>
        <taxon>Pseudomonadota</taxon>
        <taxon>Gammaproteobacteria</taxon>
        <taxon>Moraxellales</taxon>
        <taxon>Moraxellaceae</taxon>
        <taxon>Acinetobacter</taxon>
        <taxon>Acinetobacter calcoaceticus/baumannii complex</taxon>
    </lineage>
</organism>
<protein>
    <recommendedName>
        <fullName evidence="1">Phosphoribosylformylglycinamidine cyclo-ligase</fullName>
        <ecNumber evidence="1">6.3.3.1</ecNumber>
    </recommendedName>
    <alternativeName>
        <fullName evidence="1">AIR synthase</fullName>
    </alternativeName>
    <alternativeName>
        <fullName evidence="1">AIRS</fullName>
    </alternativeName>
    <alternativeName>
        <fullName evidence="1">Phosphoribosyl-aminoimidazole synthetase</fullName>
    </alternativeName>
</protein>